<dbReference type="EC" id="3.2.2.-" evidence="1"/>
<dbReference type="EC" id="4.2.99.18" evidence="1"/>
<dbReference type="EMBL" id="CP000034">
    <property type="protein sequence ID" value="ABB60838.1"/>
    <property type="molecule type" value="Genomic_DNA"/>
</dbReference>
<dbReference type="RefSeq" id="WP_001114030.1">
    <property type="nucleotide sequence ID" value="NC_007606.1"/>
</dbReference>
<dbReference type="RefSeq" id="YP_402327.1">
    <property type="nucleotide sequence ID" value="NC_007606.1"/>
</dbReference>
<dbReference type="SMR" id="Q32IL9"/>
<dbReference type="STRING" id="300267.SDY_0649"/>
<dbReference type="EnsemblBacteria" id="ABB60838">
    <property type="protein sequence ID" value="ABB60838"/>
    <property type="gene ID" value="SDY_0649"/>
</dbReference>
<dbReference type="KEGG" id="sdy:SDY_0649"/>
<dbReference type="PATRIC" id="fig|300267.13.peg.757"/>
<dbReference type="HOGENOM" id="CLU_038423_2_2_6"/>
<dbReference type="Proteomes" id="UP000002716">
    <property type="component" value="Chromosome"/>
</dbReference>
<dbReference type="GO" id="GO:0140078">
    <property type="term" value="F:class I DNA-(apurinic or apyrimidinic site) endonuclease activity"/>
    <property type="evidence" value="ECO:0007669"/>
    <property type="project" value="UniProtKB-EC"/>
</dbReference>
<dbReference type="GO" id="GO:0003684">
    <property type="term" value="F:damaged DNA binding"/>
    <property type="evidence" value="ECO:0007669"/>
    <property type="project" value="InterPro"/>
</dbReference>
<dbReference type="GO" id="GO:0000703">
    <property type="term" value="F:oxidized pyrimidine nucleobase lesion DNA N-glycosylase activity"/>
    <property type="evidence" value="ECO:0007669"/>
    <property type="project" value="UniProtKB-UniRule"/>
</dbReference>
<dbReference type="GO" id="GO:0008270">
    <property type="term" value="F:zinc ion binding"/>
    <property type="evidence" value="ECO:0007669"/>
    <property type="project" value="UniProtKB-UniRule"/>
</dbReference>
<dbReference type="GO" id="GO:0006284">
    <property type="term" value="P:base-excision repair"/>
    <property type="evidence" value="ECO:0007669"/>
    <property type="project" value="InterPro"/>
</dbReference>
<dbReference type="CDD" id="cd08965">
    <property type="entry name" value="EcNei-like_N"/>
    <property type="match status" value="1"/>
</dbReference>
<dbReference type="FunFam" id="1.10.8.50:FF:000005">
    <property type="entry name" value="Endonuclease 8"/>
    <property type="match status" value="1"/>
</dbReference>
<dbReference type="FunFam" id="3.20.190.10:FF:000002">
    <property type="entry name" value="Endonuclease 8"/>
    <property type="match status" value="1"/>
</dbReference>
<dbReference type="Gene3D" id="1.10.8.50">
    <property type="match status" value="1"/>
</dbReference>
<dbReference type="Gene3D" id="3.20.190.10">
    <property type="entry name" value="MutM-like, N-terminal"/>
    <property type="match status" value="1"/>
</dbReference>
<dbReference type="HAMAP" id="MF_01253">
    <property type="entry name" value="Endonuclease_8"/>
    <property type="match status" value="1"/>
</dbReference>
<dbReference type="InterPro" id="IPR015886">
    <property type="entry name" value="DNA_glyclase/AP_lyase_DNA-bd"/>
</dbReference>
<dbReference type="InterPro" id="IPR015887">
    <property type="entry name" value="DNA_glyclase_Znf_dom_DNA_BS"/>
</dbReference>
<dbReference type="InterPro" id="IPR044091">
    <property type="entry name" value="EcNei-like_N"/>
</dbReference>
<dbReference type="InterPro" id="IPR023713">
    <property type="entry name" value="Endonuclease-VIII"/>
</dbReference>
<dbReference type="InterPro" id="IPR012319">
    <property type="entry name" value="FPG_cat"/>
</dbReference>
<dbReference type="InterPro" id="IPR035937">
    <property type="entry name" value="MutM-like_N-ter"/>
</dbReference>
<dbReference type="InterPro" id="IPR010979">
    <property type="entry name" value="Ribosomal_uS13-like_H2TH"/>
</dbReference>
<dbReference type="InterPro" id="IPR000214">
    <property type="entry name" value="Znf_DNA_glyclase/AP_lyase"/>
</dbReference>
<dbReference type="InterPro" id="IPR010663">
    <property type="entry name" value="Znf_FPG/IleRS"/>
</dbReference>
<dbReference type="NCBIfam" id="NF007763">
    <property type="entry name" value="PRK10445.1"/>
    <property type="match status" value="1"/>
</dbReference>
<dbReference type="PANTHER" id="PTHR42697">
    <property type="entry name" value="ENDONUCLEASE 8"/>
    <property type="match status" value="1"/>
</dbReference>
<dbReference type="PANTHER" id="PTHR42697:SF1">
    <property type="entry name" value="ENDONUCLEASE 8"/>
    <property type="match status" value="1"/>
</dbReference>
<dbReference type="Pfam" id="PF01149">
    <property type="entry name" value="Fapy_DNA_glyco"/>
    <property type="match status" value="1"/>
</dbReference>
<dbReference type="Pfam" id="PF06831">
    <property type="entry name" value="H2TH"/>
    <property type="match status" value="1"/>
</dbReference>
<dbReference type="Pfam" id="PF06827">
    <property type="entry name" value="zf-FPG_IleRS"/>
    <property type="match status" value="1"/>
</dbReference>
<dbReference type="SMART" id="SM00898">
    <property type="entry name" value="Fapy_DNA_glyco"/>
    <property type="match status" value="1"/>
</dbReference>
<dbReference type="SMART" id="SM01232">
    <property type="entry name" value="H2TH"/>
    <property type="match status" value="1"/>
</dbReference>
<dbReference type="SUPFAM" id="SSF57716">
    <property type="entry name" value="Glucocorticoid receptor-like (DNA-binding domain)"/>
    <property type="match status" value="1"/>
</dbReference>
<dbReference type="SUPFAM" id="SSF81624">
    <property type="entry name" value="N-terminal domain of MutM-like DNA repair proteins"/>
    <property type="match status" value="1"/>
</dbReference>
<dbReference type="SUPFAM" id="SSF46946">
    <property type="entry name" value="S13-like H2TH domain"/>
    <property type="match status" value="1"/>
</dbReference>
<dbReference type="PROSITE" id="PS51068">
    <property type="entry name" value="FPG_CAT"/>
    <property type="match status" value="1"/>
</dbReference>
<dbReference type="PROSITE" id="PS01242">
    <property type="entry name" value="ZF_FPG_1"/>
    <property type="match status" value="1"/>
</dbReference>
<dbReference type="PROSITE" id="PS51066">
    <property type="entry name" value="ZF_FPG_2"/>
    <property type="match status" value="1"/>
</dbReference>
<gene>
    <name evidence="1" type="primary">nei</name>
    <name type="ordered locus">SDY_0649</name>
</gene>
<reference key="1">
    <citation type="journal article" date="2005" name="Nucleic Acids Res.">
        <title>Genome dynamics and diversity of Shigella species, the etiologic agents of bacillary dysentery.</title>
        <authorList>
            <person name="Yang F."/>
            <person name="Yang J."/>
            <person name="Zhang X."/>
            <person name="Chen L."/>
            <person name="Jiang Y."/>
            <person name="Yan Y."/>
            <person name="Tang X."/>
            <person name="Wang J."/>
            <person name="Xiong Z."/>
            <person name="Dong J."/>
            <person name="Xue Y."/>
            <person name="Zhu Y."/>
            <person name="Xu X."/>
            <person name="Sun L."/>
            <person name="Chen S."/>
            <person name="Nie H."/>
            <person name="Peng J."/>
            <person name="Xu J."/>
            <person name="Wang Y."/>
            <person name="Yuan Z."/>
            <person name="Wen Y."/>
            <person name="Yao Z."/>
            <person name="Shen Y."/>
            <person name="Qiang B."/>
            <person name="Hou Y."/>
            <person name="Yu J."/>
            <person name="Jin Q."/>
        </authorList>
    </citation>
    <scope>NUCLEOTIDE SEQUENCE [LARGE SCALE GENOMIC DNA]</scope>
    <source>
        <strain>Sd197</strain>
    </source>
</reference>
<evidence type="ECO:0000255" key="1">
    <source>
        <dbReference type="HAMAP-Rule" id="MF_01253"/>
    </source>
</evidence>
<protein>
    <recommendedName>
        <fullName evidence="1">Endonuclease 8</fullName>
    </recommendedName>
    <alternativeName>
        <fullName evidence="1">DNA glycosylase/AP lyase Nei</fullName>
        <ecNumber evidence="1">3.2.2.-</ecNumber>
        <ecNumber evidence="1">4.2.99.18</ecNumber>
    </alternativeName>
    <alternativeName>
        <fullName evidence="1">DNA-(apurinic or apyrimidinic site) lyase Nei</fullName>
    </alternativeName>
    <alternativeName>
        <fullName evidence="1">Endonuclease VIII</fullName>
    </alternativeName>
</protein>
<name>END8_SHIDS</name>
<proteinExistence type="inferred from homology"/>
<accession>Q32IL9</accession>
<keyword id="KW-0227">DNA damage</keyword>
<keyword id="KW-0234">DNA repair</keyword>
<keyword id="KW-0238">DNA-binding</keyword>
<keyword id="KW-0326">Glycosidase</keyword>
<keyword id="KW-0378">Hydrolase</keyword>
<keyword id="KW-0456">Lyase</keyword>
<keyword id="KW-0479">Metal-binding</keyword>
<keyword id="KW-0511">Multifunctional enzyme</keyword>
<keyword id="KW-1185">Reference proteome</keyword>
<keyword id="KW-0862">Zinc</keyword>
<keyword id="KW-0863">Zinc-finger</keyword>
<sequence>MPEGPEIRRAADNLEAAIKGKPLTDVWFAFPQLKTYQSQLIGQHVTHVETRGKALLTHFSNDLTLYSHNQLYGVWRVVDTGEESQTTRVLRVKLQTADKTILLYSASDIEMLTPEQLTMHPFLQRVGPDVLDPNLTPEVVKERLLSPRFRNRQFAGLLLDQAFLAGLGNYLRVEILWQVGLTGNHKAKDLNAAQLDALAHALLDIPRFSYATRGQVDENKHHGALFRFKVFHRDGELCERCGGIIEKTTLSSRPFYWCPGCQH</sequence>
<feature type="initiator methionine" description="Removed" evidence="1">
    <location>
        <position position="1"/>
    </location>
</feature>
<feature type="chain" id="PRO_1000067210" description="Endonuclease 8">
    <location>
        <begin position="2"/>
        <end position="263"/>
    </location>
</feature>
<feature type="zinc finger region" description="FPG-type" evidence="1">
    <location>
        <begin position="229"/>
        <end position="263"/>
    </location>
</feature>
<feature type="active site" description="Schiff-base intermediate with DNA" evidence="1">
    <location>
        <position position="2"/>
    </location>
</feature>
<feature type="active site" description="Proton donor" evidence="1">
    <location>
        <position position="3"/>
    </location>
</feature>
<feature type="active site" description="Proton donor; for beta-elimination activity" evidence="1">
    <location>
        <position position="53"/>
    </location>
</feature>
<feature type="active site" description="Proton donor; for delta-elimination activity" evidence="1">
    <location>
        <position position="253"/>
    </location>
</feature>
<feature type="binding site" evidence="1">
    <location>
        <position position="70"/>
    </location>
    <ligand>
        <name>DNA</name>
        <dbReference type="ChEBI" id="CHEBI:16991"/>
    </ligand>
</feature>
<feature type="binding site" evidence="1">
    <location>
        <position position="125"/>
    </location>
    <ligand>
        <name>DNA</name>
        <dbReference type="ChEBI" id="CHEBI:16991"/>
    </ligand>
</feature>
<feature type="binding site" evidence="1">
    <location>
        <position position="169"/>
    </location>
    <ligand>
        <name>DNA</name>
        <dbReference type="ChEBI" id="CHEBI:16991"/>
    </ligand>
</feature>
<comment type="function">
    <text evidence="1">Involved in base excision repair of DNA damaged by oxidation or by mutagenic agents. Acts as a DNA glycosylase that recognizes and removes damaged bases. Has a preference for oxidized pyrimidines, such as thymine glycol, 5,6-dihydrouracil and 5,6-dihydrothymine. Has AP (apurinic/apyrimidinic) lyase activity and introduces nicks in the DNA strand. Cleaves the DNA backbone by beta-delta elimination to generate a single-strand break at the site of the removed base with both 3'- and 5'-phosphates.</text>
</comment>
<comment type="catalytic activity">
    <reaction evidence="1">
        <text>2'-deoxyribonucleotide-(2'-deoxyribose 5'-phosphate)-2'-deoxyribonucleotide-DNA = a 3'-end 2'-deoxyribonucleotide-(2,3-dehydro-2,3-deoxyribose 5'-phosphate)-DNA + a 5'-end 5'-phospho-2'-deoxyribonucleoside-DNA + H(+)</text>
        <dbReference type="Rhea" id="RHEA:66592"/>
        <dbReference type="Rhea" id="RHEA-COMP:13180"/>
        <dbReference type="Rhea" id="RHEA-COMP:16897"/>
        <dbReference type="Rhea" id="RHEA-COMP:17067"/>
        <dbReference type="ChEBI" id="CHEBI:15378"/>
        <dbReference type="ChEBI" id="CHEBI:136412"/>
        <dbReference type="ChEBI" id="CHEBI:157695"/>
        <dbReference type="ChEBI" id="CHEBI:167181"/>
        <dbReference type="EC" id="4.2.99.18"/>
    </reaction>
</comment>
<comment type="cofactor">
    <cofactor evidence="1">
        <name>Zn(2+)</name>
        <dbReference type="ChEBI" id="CHEBI:29105"/>
    </cofactor>
    <text evidence="1">Binds 1 zinc ion per subunit.</text>
</comment>
<comment type="similarity">
    <text evidence="1">Belongs to the FPG family.</text>
</comment>
<organism>
    <name type="scientific">Shigella dysenteriae serotype 1 (strain Sd197)</name>
    <dbReference type="NCBI Taxonomy" id="300267"/>
    <lineage>
        <taxon>Bacteria</taxon>
        <taxon>Pseudomonadati</taxon>
        <taxon>Pseudomonadota</taxon>
        <taxon>Gammaproteobacteria</taxon>
        <taxon>Enterobacterales</taxon>
        <taxon>Enterobacteriaceae</taxon>
        <taxon>Shigella</taxon>
    </lineage>
</organism>